<reference key="1">
    <citation type="journal article" date="2009" name="PLoS ONE">
        <title>Genome degradation in Brucella ovis corresponds with narrowing of its host range and tissue tropism.</title>
        <authorList>
            <person name="Tsolis R.M."/>
            <person name="Seshadri R."/>
            <person name="Santos R.L."/>
            <person name="Sangari F.J."/>
            <person name="Lobo J.M."/>
            <person name="de Jong M.F."/>
            <person name="Ren Q."/>
            <person name="Myers G."/>
            <person name="Brinkac L.M."/>
            <person name="Nelson W.C."/>
            <person name="Deboy R.T."/>
            <person name="Angiuoli S."/>
            <person name="Khouri H."/>
            <person name="Dimitrov G."/>
            <person name="Robinson J.R."/>
            <person name="Mulligan S."/>
            <person name="Walker R.L."/>
            <person name="Elzer P.E."/>
            <person name="Hassan K.A."/>
            <person name="Paulsen I.T."/>
        </authorList>
    </citation>
    <scope>NUCLEOTIDE SEQUENCE [LARGE SCALE GENOMIC DNA]</scope>
    <source>
        <strain>ATCC 25840 / 63/290 / NCTC 10512</strain>
    </source>
</reference>
<protein>
    <recommendedName>
        <fullName evidence="1">tRNA uridine 5-carboxymethylaminomethyl modification enzyme MnmG</fullName>
    </recommendedName>
    <alternativeName>
        <fullName evidence="1">Glucose-inhibited division protein A</fullName>
    </alternativeName>
</protein>
<comment type="function">
    <text evidence="1">NAD-binding protein involved in the addition of a carboxymethylaminomethyl (cmnm) group at the wobble position (U34) of certain tRNAs, forming tRNA-cmnm(5)s(2)U34.</text>
</comment>
<comment type="cofactor">
    <cofactor evidence="1">
        <name>FAD</name>
        <dbReference type="ChEBI" id="CHEBI:57692"/>
    </cofactor>
</comment>
<comment type="subunit">
    <text evidence="1">Homodimer. Heterotetramer of two MnmE and two MnmG subunits.</text>
</comment>
<comment type="subcellular location">
    <subcellularLocation>
        <location evidence="1">Cytoplasm</location>
    </subcellularLocation>
</comment>
<comment type="similarity">
    <text evidence="1">Belongs to the MnmG family.</text>
</comment>
<accession>A5VT19</accession>
<feature type="chain" id="PRO_1000016558" description="tRNA uridine 5-carboxymethylaminomethyl modification enzyme MnmG">
    <location>
        <begin position="1"/>
        <end position="636"/>
    </location>
</feature>
<feature type="binding site" evidence="1">
    <location>
        <begin position="15"/>
        <end position="20"/>
    </location>
    <ligand>
        <name>FAD</name>
        <dbReference type="ChEBI" id="CHEBI:57692"/>
    </ligand>
</feature>
<feature type="binding site" evidence="1">
    <location>
        <begin position="274"/>
        <end position="288"/>
    </location>
    <ligand>
        <name>NAD(+)</name>
        <dbReference type="ChEBI" id="CHEBI:57540"/>
    </ligand>
</feature>
<sequence>MNSAEALAFDVIVIGGGHAGCEAASAAARAGARTALVTHRFDTIGVMSCNPAIGGLGKGHLVREIDALDGLMGRVADRAGIQFRLLNRRKGPAVRGPRTQADRKLYRLAMQQIITEQENLTVVEGGAADLVCDGERISGVTLADGRVLKCGAVVLTTGTFLNGLIHIGEKRFQAGRMGEKPALGLSKRLLSFGFTLGRLKTGTPPRLDGRTIDWQSLDMQSADEEPVPFSLMTDRITTPQIECGITRTTPETHDIIRANLHRSAMYSGSIEGIGPRYCPSVEDKIVKFGDRDGHQIFLEPEGLDDDTVYPNGISTSLPEDVQLEILKTIPGLEKAVLLQPGYAIEYDFIDPRELKRSLETRKVCGLFLAGQINGTTGYEEAGAQGLLAGLNAARRAAGSEPVILQRTEAYIGVMVDDLTSRGVSEPYRMFTSRAEFRLSLRADNADQRLTPLADEVGILSEERRKRYLTRETALSHARMVTQSLSITPNLAGYYDLRLNQDGVRRSAYDLLSYPDINLDRLIAIWPELASIDPVTREALEIEAQYAVYMERQQSDIAVMEREERLLIPSGLDFDAISGLSNELKQKLKQRKPETIAEAQRVDGMTPAAVALLIAQIRKFGGRQKLAAETLEGKGAA</sequence>
<keyword id="KW-0963">Cytoplasm</keyword>
<keyword id="KW-0274">FAD</keyword>
<keyword id="KW-0285">Flavoprotein</keyword>
<keyword id="KW-0520">NAD</keyword>
<keyword id="KW-0819">tRNA processing</keyword>
<gene>
    <name evidence="1" type="primary">mnmG</name>
    <name evidence="1" type="synonym">gidA</name>
    <name type="ordered locus">BOV_1981</name>
</gene>
<dbReference type="EMBL" id="CP000708">
    <property type="protein sequence ID" value="ABQ60378.1"/>
    <property type="molecule type" value="Genomic_DNA"/>
</dbReference>
<dbReference type="RefSeq" id="WP_006014442.1">
    <property type="nucleotide sequence ID" value="NC_009505.1"/>
</dbReference>
<dbReference type="SMR" id="A5VT19"/>
<dbReference type="GeneID" id="45125315"/>
<dbReference type="KEGG" id="bov:BOV_1981"/>
<dbReference type="HOGENOM" id="CLU_007831_2_2_5"/>
<dbReference type="PhylomeDB" id="A5VT19"/>
<dbReference type="Proteomes" id="UP000006383">
    <property type="component" value="Chromosome I"/>
</dbReference>
<dbReference type="GO" id="GO:0005829">
    <property type="term" value="C:cytosol"/>
    <property type="evidence" value="ECO:0007669"/>
    <property type="project" value="TreeGrafter"/>
</dbReference>
<dbReference type="GO" id="GO:0050660">
    <property type="term" value="F:flavin adenine dinucleotide binding"/>
    <property type="evidence" value="ECO:0007669"/>
    <property type="project" value="UniProtKB-UniRule"/>
</dbReference>
<dbReference type="GO" id="GO:0030488">
    <property type="term" value="P:tRNA methylation"/>
    <property type="evidence" value="ECO:0007669"/>
    <property type="project" value="TreeGrafter"/>
</dbReference>
<dbReference type="GO" id="GO:0002098">
    <property type="term" value="P:tRNA wobble uridine modification"/>
    <property type="evidence" value="ECO:0007669"/>
    <property type="project" value="InterPro"/>
</dbReference>
<dbReference type="FunFam" id="3.50.50.60:FF:000145">
    <property type="entry name" value="tRNA uridine 5-carboxymethylaminomethyl modification enzyme"/>
    <property type="match status" value="1"/>
</dbReference>
<dbReference type="FunFam" id="1.10.150.570:FF:000001">
    <property type="entry name" value="tRNA uridine 5-carboxymethylaminomethyl modification enzyme MnmG"/>
    <property type="match status" value="1"/>
</dbReference>
<dbReference type="FunFam" id="3.50.50.60:FF:000002">
    <property type="entry name" value="tRNA uridine 5-carboxymethylaminomethyl modification enzyme MnmG"/>
    <property type="match status" value="1"/>
</dbReference>
<dbReference type="Gene3D" id="3.50.50.60">
    <property type="entry name" value="FAD/NAD(P)-binding domain"/>
    <property type="match status" value="2"/>
</dbReference>
<dbReference type="Gene3D" id="1.10.150.570">
    <property type="entry name" value="GidA associated domain, C-terminal subdomain"/>
    <property type="match status" value="1"/>
</dbReference>
<dbReference type="Gene3D" id="1.10.10.1800">
    <property type="entry name" value="tRNA uridine 5-carboxymethylaminomethyl modification enzyme MnmG/GidA"/>
    <property type="match status" value="1"/>
</dbReference>
<dbReference type="HAMAP" id="MF_00129">
    <property type="entry name" value="MnmG_GidA"/>
    <property type="match status" value="1"/>
</dbReference>
<dbReference type="InterPro" id="IPR036188">
    <property type="entry name" value="FAD/NAD-bd_sf"/>
</dbReference>
<dbReference type="InterPro" id="IPR049312">
    <property type="entry name" value="GIDA_C_N"/>
</dbReference>
<dbReference type="InterPro" id="IPR004416">
    <property type="entry name" value="MnmG"/>
</dbReference>
<dbReference type="InterPro" id="IPR002218">
    <property type="entry name" value="MnmG-rel"/>
</dbReference>
<dbReference type="InterPro" id="IPR020595">
    <property type="entry name" value="MnmG-rel_CS"/>
</dbReference>
<dbReference type="InterPro" id="IPR026904">
    <property type="entry name" value="MnmG_C"/>
</dbReference>
<dbReference type="InterPro" id="IPR047001">
    <property type="entry name" value="MnmG_C_subdom"/>
</dbReference>
<dbReference type="InterPro" id="IPR044920">
    <property type="entry name" value="MnmG_C_subdom_sf"/>
</dbReference>
<dbReference type="InterPro" id="IPR040131">
    <property type="entry name" value="MnmG_N"/>
</dbReference>
<dbReference type="NCBIfam" id="TIGR00136">
    <property type="entry name" value="mnmG_gidA"/>
    <property type="match status" value="1"/>
</dbReference>
<dbReference type="PANTHER" id="PTHR11806">
    <property type="entry name" value="GLUCOSE INHIBITED DIVISION PROTEIN A"/>
    <property type="match status" value="1"/>
</dbReference>
<dbReference type="PANTHER" id="PTHR11806:SF0">
    <property type="entry name" value="PROTEIN MTO1 HOMOLOG, MITOCHONDRIAL"/>
    <property type="match status" value="1"/>
</dbReference>
<dbReference type="Pfam" id="PF01134">
    <property type="entry name" value="GIDA"/>
    <property type="match status" value="1"/>
</dbReference>
<dbReference type="Pfam" id="PF21680">
    <property type="entry name" value="GIDA_C_1st"/>
    <property type="match status" value="1"/>
</dbReference>
<dbReference type="Pfam" id="PF13932">
    <property type="entry name" value="SAM_GIDA_C"/>
    <property type="match status" value="1"/>
</dbReference>
<dbReference type="SMART" id="SM01228">
    <property type="entry name" value="GIDA_assoc_3"/>
    <property type="match status" value="1"/>
</dbReference>
<dbReference type="SUPFAM" id="SSF51905">
    <property type="entry name" value="FAD/NAD(P)-binding domain"/>
    <property type="match status" value="1"/>
</dbReference>
<dbReference type="PROSITE" id="PS01280">
    <property type="entry name" value="GIDA_1"/>
    <property type="match status" value="1"/>
</dbReference>
<dbReference type="PROSITE" id="PS01281">
    <property type="entry name" value="GIDA_2"/>
    <property type="match status" value="1"/>
</dbReference>
<name>MNMG_BRUO2</name>
<proteinExistence type="inferred from homology"/>
<organism>
    <name type="scientific">Brucella ovis (strain ATCC 25840 / 63/290 / NCTC 10512)</name>
    <dbReference type="NCBI Taxonomy" id="444178"/>
    <lineage>
        <taxon>Bacteria</taxon>
        <taxon>Pseudomonadati</taxon>
        <taxon>Pseudomonadota</taxon>
        <taxon>Alphaproteobacteria</taxon>
        <taxon>Hyphomicrobiales</taxon>
        <taxon>Brucellaceae</taxon>
        <taxon>Brucella/Ochrobactrum group</taxon>
        <taxon>Brucella</taxon>
    </lineage>
</organism>
<evidence type="ECO:0000255" key="1">
    <source>
        <dbReference type="HAMAP-Rule" id="MF_00129"/>
    </source>
</evidence>